<comment type="function">
    <text evidence="4 5 6 7 8 10 11">Lipid transporter that specifically mediates export of sphingosine-1-phosphate (sphing-4-enine 1-phosphate, S1P) and sphinganine-1-phosphate in the lymph, thereby playing a role in lymphocyte trafficking (PubMed:22406534, PubMed:22664872, PubMed:23103166, PubMed:23180825, PubMed:34260944). S1P is a bioactive signaling molecule that regulates many physiological processes important for the development and for the immune system (PubMed:22406534, PubMed:22664872, PubMed:23103166, PubMed:23180825, PubMed:34260944). Regulates levels of S1P and the S1P gradient that exists between the high circulating concentrations of S1P and low tissue levels that control lymphocyte trafficking (PubMed:22406534, PubMed:22664872, PubMed:23180825, PubMed:34260944). Required for the egress of T-cells from lymph nodes during an immune response by mediating S1P secretion, which generates a gradient that enables activated T-cells to access lymph (PubMed:22406534, PubMed:34260944). Also required for the egress of immature B-cells from the bone marrow (PubMed:22406534). In contrast, it does not mediate S1P release from red blood cells (PubMed:22406534, PubMed:23103166). Involved in auditory function: S1P release in the inner ear is required for maintenance of the endocochlear potential in the cochlea (PubMed:25356849). In addition to export, also able to mediate S1P import (PubMed:33785361).</text>
</comment>
<comment type="catalytic activity">
    <reaction evidence="7 16">
        <text>sphing-4-enine 1-phosphate(in) = sphing-4-enine 1-phosphate(out)</text>
        <dbReference type="Rhea" id="RHEA:38667"/>
        <dbReference type="ChEBI" id="CHEBI:60119"/>
    </reaction>
</comment>
<comment type="catalytic activity">
    <reaction evidence="7">
        <text>sphinganine 1-phosphate(in) = sphinganine 1-phosphate(out)</text>
        <dbReference type="Rhea" id="RHEA:38671"/>
        <dbReference type="ChEBI" id="CHEBI:57939"/>
    </reaction>
</comment>
<comment type="subcellular location">
    <subcellularLocation>
        <location evidence="1">Cell membrane</location>
        <topology evidence="2">Multi-pass membrane protein</topology>
    </subcellularLocation>
    <subcellularLocation>
        <location evidence="1">Endosome membrane</location>
        <topology evidence="2">Multi-pass membrane protein</topology>
    </subcellularLocation>
</comment>
<comment type="alternative products">
    <event type="alternative splicing"/>
    <isoform>
        <id>Q91VM4-1</id>
        <name>1</name>
        <sequence type="displayed"/>
    </isoform>
    <isoform>
        <id>Q91VM4-2</id>
        <name>2</name>
        <sequence type="described" ref="VSP_036390 VSP_036391"/>
    </isoform>
</comment>
<comment type="tissue specificity">
    <text evidence="5 6 8">Expression is high in the lungs and liver, low in the lymph nodes, spleen and bone marrow, and very low but detectable in the thymus (PubMed:22664872). Not expressed in red blood cells (PubMed:23103166). Also expressed in the inner ear: expressed in the cochlea, both in the lateral wall and organ of Corti (PubMed:25356849).</text>
</comment>
<comment type="disruption phenotype">
    <text evidence="4 5 7 8 9 11">Deficient mice are viable, do not exhibit cardiac defects or embryonic lethality, and are generally normal and fertile (PubMed:22406534, PubMed:22664872). Deficient mice have decreased levels of sphingosine 1-phosphate (S1P) and dihydro-S1P in blood, accompanied by increases in very long chain ceramide species, and have defective lymphocyte trafficking (PubMed:22406534, PubMed:22664872, PubMed:23180825). S1P levels are increased in lymph from deficient mice as well as in specific tissues, including lymph nodes, and interstitial fluid (PubMed:23180825). Moreover, these mice have aberrant lymphatic sinus that appeared collapsed, with reduced numbers of lymphocytes (PubMed:23180825). Mice display marked accumulation of mature T-cells in thymus and decreased numbers of peripheral T-cells in blood and secondary lymphoid organs (PubMed:22406534, PubMed:34260944). Mature recirculating B-cells are reduced in frequency in the bone marrow as well as in blood and secondary lymphoid organs (PubMed:22406534). Mice do not show defects in S1P release from blood cells (PubMed:22406534). Knockout mice are protected against experimental autoimmune encephalomyelitis (PubMed:34260944). Mutants also show a profound hearing impairment, characterized by a progressive degeneration of sensory hair cells in the organ of Corti (PubMed:25356849, PubMed:30973865). Hearing loss is caused by a decline in the endocochlear potential (PubMed:25356849). Conditional deletion in the cochlea causes early onset progressive hearing loss (PubMed:25356849). In contrast, hearing impairment is not observed in mice with targeted deletion in red blood cells, platelets, lymphatic or vascular endothelial cells (PubMed:25356849).</text>
</comment>
<comment type="similarity">
    <text evidence="15">Belongs to the major facilitator superfamily. Spinster (TC 2.A.1.49) family.</text>
</comment>
<comment type="sequence caution" evidence="15">
    <conflict type="erroneous initiation">
        <sequence resource="EMBL-CDS" id="AAH11467"/>
    </conflict>
    <text>Extended N-terminus.</text>
</comment>
<gene>
    <name evidence="13 17" type="primary">Spns2</name>
</gene>
<dbReference type="EMBL" id="AL662812">
    <property type="status" value="NOT_ANNOTATED_CDS"/>
    <property type="molecule type" value="Genomic_DNA"/>
</dbReference>
<dbReference type="EMBL" id="BC011467">
    <property type="protein sequence ID" value="AAH11467.1"/>
    <property type="status" value="ALT_INIT"/>
    <property type="molecule type" value="mRNA"/>
</dbReference>
<dbReference type="EMBL" id="BC025823">
    <property type="protein sequence ID" value="AAH25823.1"/>
    <property type="molecule type" value="mRNA"/>
</dbReference>
<dbReference type="EMBL" id="AB441166">
    <property type="protein sequence ID" value="BAH15193.1"/>
    <property type="molecule type" value="mRNA"/>
</dbReference>
<dbReference type="CCDS" id="CCDS48841.1">
    <molecule id="Q91VM4-1"/>
</dbReference>
<dbReference type="RefSeq" id="NP_694700.2">
    <molecule id="Q91VM4-1"/>
    <property type="nucleotide sequence ID" value="NM_153060.3"/>
</dbReference>
<dbReference type="RefSeq" id="XP_017169949.1">
    <molecule id="Q91VM4-1"/>
    <property type="nucleotide sequence ID" value="XM_017314460.3"/>
</dbReference>
<dbReference type="SMR" id="Q91VM4"/>
<dbReference type="FunCoup" id="Q91VM4">
    <property type="interactions" value="180"/>
</dbReference>
<dbReference type="STRING" id="10090.ENSMUSP00000044418"/>
<dbReference type="BindingDB" id="Q91VM4"/>
<dbReference type="ChEMBL" id="CHEMBL5169183"/>
<dbReference type="SwissLipids" id="SLP:000001139"/>
<dbReference type="GlyGen" id="Q91VM4">
    <property type="glycosylation" value="1 site"/>
</dbReference>
<dbReference type="iPTMnet" id="Q91VM4"/>
<dbReference type="PhosphoSitePlus" id="Q91VM4"/>
<dbReference type="SwissPalm" id="Q91VM4"/>
<dbReference type="PaxDb" id="10090-ENSMUSP00000044418"/>
<dbReference type="ProteomicsDB" id="258594">
    <molecule id="Q91VM4-1"/>
</dbReference>
<dbReference type="ProteomicsDB" id="258595">
    <molecule id="Q91VM4-2"/>
</dbReference>
<dbReference type="Antibodypedia" id="42673">
    <property type="antibodies" value="127 antibodies from 20 providers"/>
</dbReference>
<dbReference type="Ensembl" id="ENSMUST00000045303.10">
    <molecule id="Q91VM4-1"/>
    <property type="protein sequence ID" value="ENSMUSP00000044418.4"/>
    <property type="gene ID" value="ENSMUSG00000040447.16"/>
</dbReference>
<dbReference type="GeneID" id="216892"/>
<dbReference type="KEGG" id="mmu:216892"/>
<dbReference type="UCSC" id="uc007jyz.3">
    <molecule id="Q91VM4-1"/>
    <property type="organism name" value="mouse"/>
</dbReference>
<dbReference type="UCSC" id="uc007jza.1">
    <molecule id="Q91VM4-2"/>
    <property type="organism name" value="mouse"/>
</dbReference>
<dbReference type="AGR" id="MGI:2384936"/>
<dbReference type="CTD" id="124976"/>
<dbReference type="MGI" id="MGI:2384936">
    <property type="gene designation" value="Spns2"/>
</dbReference>
<dbReference type="VEuPathDB" id="HostDB:ENSMUSG00000040447"/>
<dbReference type="eggNOG" id="KOG1330">
    <property type="taxonomic scope" value="Eukaryota"/>
</dbReference>
<dbReference type="GeneTree" id="ENSGT00390000005976"/>
<dbReference type="HOGENOM" id="CLU_001265_5_12_1"/>
<dbReference type="InParanoid" id="Q91VM4"/>
<dbReference type="OMA" id="VFCGGWL"/>
<dbReference type="OrthoDB" id="6770063at2759"/>
<dbReference type="PhylomeDB" id="Q91VM4"/>
<dbReference type="TreeFam" id="TF314395"/>
<dbReference type="Reactome" id="R-MMU-1660661">
    <property type="pathway name" value="Sphingolipid de novo biosynthesis"/>
</dbReference>
<dbReference type="BioGRID-ORCS" id="216892">
    <property type="hits" value="2 hits in 74 CRISPR screens"/>
</dbReference>
<dbReference type="ChiTaRS" id="Spns2">
    <property type="organism name" value="mouse"/>
</dbReference>
<dbReference type="PRO" id="PR:Q91VM4"/>
<dbReference type="Proteomes" id="UP000000589">
    <property type="component" value="Chromosome 11"/>
</dbReference>
<dbReference type="RNAct" id="Q91VM4">
    <property type="molecule type" value="protein"/>
</dbReference>
<dbReference type="Bgee" id="ENSMUSG00000040447">
    <property type="expression patterns" value="Expressed in esophagus and 240 other cell types or tissues"/>
</dbReference>
<dbReference type="ExpressionAtlas" id="Q91VM4">
    <property type="expression patterns" value="baseline and differential"/>
</dbReference>
<dbReference type="GO" id="GO:0010008">
    <property type="term" value="C:endosome membrane"/>
    <property type="evidence" value="ECO:0007669"/>
    <property type="project" value="UniProtKB-SubCell"/>
</dbReference>
<dbReference type="GO" id="GO:0005886">
    <property type="term" value="C:plasma membrane"/>
    <property type="evidence" value="ECO:0007669"/>
    <property type="project" value="UniProtKB-SubCell"/>
</dbReference>
<dbReference type="GO" id="GO:0046624">
    <property type="term" value="F:sphingolipid transporter activity"/>
    <property type="evidence" value="ECO:0000314"/>
    <property type="project" value="UniProtKB"/>
</dbReference>
<dbReference type="GO" id="GO:0022857">
    <property type="term" value="F:transmembrane transporter activity"/>
    <property type="evidence" value="ECO:0007669"/>
    <property type="project" value="InterPro"/>
</dbReference>
<dbReference type="GO" id="GO:0001782">
    <property type="term" value="P:B cell homeostasis"/>
    <property type="evidence" value="ECO:0000315"/>
    <property type="project" value="MGI"/>
</dbReference>
<dbReference type="GO" id="GO:0060348">
    <property type="term" value="P:bone development"/>
    <property type="evidence" value="ECO:0000315"/>
    <property type="project" value="MGI"/>
</dbReference>
<dbReference type="GO" id="GO:0048535">
    <property type="term" value="P:lymph node development"/>
    <property type="evidence" value="ECO:0000315"/>
    <property type="project" value="MGI"/>
</dbReference>
<dbReference type="GO" id="GO:0002260">
    <property type="term" value="P:lymphocyte homeostasis"/>
    <property type="evidence" value="ECO:0000315"/>
    <property type="project" value="MGI"/>
</dbReference>
<dbReference type="GO" id="GO:0072676">
    <property type="term" value="P:lymphocyte migration"/>
    <property type="evidence" value="ECO:0000315"/>
    <property type="project" value="MGI"/>
</dbReference>
<dbReference type="GO" id="GO:0048073">
    <property type="term" value="P:regulation of eye pigmentation"/>
    <property type="evidence" value="ECO:0000315"/>
    <property type="project" value="MGI"/>
</dbReference>
<dbReference type="GO" id="GO:0002920">
    <property type="term" value="P:regulation of humoral immune response"/>
    <property type="evidence" value="ECO:0000314"/>
    <property type="project" value="UniProtKB"/>
</dbReference>
<dbReference type="GO" id="GO:2000404">
    <property type="term" value="P:regulation of T cell migration"/>
    <property type="evidence" value="ECO:0000314"/>
    <property type="project" value="UniProtKB"/>
</dbReference>
<dbReference type="GO" id="GO:0007605">
    <property type="term" value="P:sensory perception of sound"/>
    <property type="evidence" value="ECO:0000315"/>
    <property type="project" value="UniProtKB"/>
</dbReference>
<dbReference type="GO" id="GO:0006665">
    <property type="term" value="P:sphingolipid metabolic process"/>
    <property type="evidence" value="ECO:0000315"/>
    <property type="project" value="MGI"/>
</dbReference>
<dbReference type="GO" id="GO:0003376">
    <property type="term" value="P:sphingosine-1-phosphate receptor signaling pathway"/>
    <property type="evidence" value="ECO:0000314"/>
    <property type="project" value="UniProtKB"/>
</dbReference>
<dbReference type="GO" id="GO:0043029">
    <property type="term" value="P:T cell homeostasis"/>
    <property type="evidence" value="ECO:0000315"/>
    <property type="project" value="MGI"/>
</dbReference>
<dbReference type="CDD" id="cd17328">
    <property type="entry name" value="MFS_spinster_like"/>
    <property type="match status" value="1"/>
</dbReference>
<dbReference type="FunFam" id="1.20.1250.20:FF:000097">
    <property type="entry name" value="protein spinster homolog 1"/>
    <property type="match status" value="1"/>
</dbReference>
<dbReference type="Gene3D" id="1.20.1250.20">
    <property type="entry name" value="MFS general substrate transporter like domains"/>
    <property type="match status" value="1"/>
</dbReference>
<dbReference type="InterPro" id="IPR011701">
    <property type="entry name" value="MFS"/>
</dbReference>
<dbReference type="InterPro" id="IPR020846">
    <property type="entry name" value="MFS_dom"/>
</dbReference>
<dbReference type="InterPro" id="IPR044770">
    <property type="entry name" value="MFS_spinster-like"/>
</dbReference>
<dbReference type="InterPro" id="IPR036259">
    <property type="entry name" value="MFS_trans_sf"/>
</dbReference>
<dbReference type="PANTHER" id="PTHR23505:SF4">
    <property type="entry name" value="SPHINGOSINE-1-PHOSPHATE TRANSPORTER SPNS2"/>
    <property type="match status" value="1"/>
</dbReference>
<dbReference type="PANTHER" id="PTHR23505">
    <property type="entry name" value="SPINSTER"/>
    <property type="match status" value="1"/>
</dbReference>
<dbReference type="Pfam" id="PF07690">
    <property type="entry name" value="MFS_1"/>
    <property type="match status" value="1"/>
</dbReference>
<dbReference type="SUPFAM" id="SSF103473">
    <property type="entry name" value="MFS general substrate transporter"/>
    <property type="match status" value="1"/>
</dbReference>
<dbReference type="PROSITE" id="PS50850">
    <property type="entry name" value="MFS"/>
    <property type="match status" value="1"/>
</dbReference>
<feature type="chain" id="PRO_0000305044" description="Sphingosine-1-phosphate transporter SPNS2">
    <location>
        <begin position="1"/>
        <end position="549"/>
    </location>
</feature>
<feature type="transmembrane region" description="Helical" evidence="2">
    <location>
        <begin position="141"/>
        <end position="161"/>
    </location>
</feature>
<feature type="transmembrane region" description="Helical" evidence="2">
    <location>
        <begin position="169"/>
        <end position="189"/>
    </location>
</feature>
<feature type="transmembrane region" description="Helical" evidence="2">
    <location>
        <begin position="202"/>
        <end position="222"/>
    </location>
</feature>
<feature type="transmembrane region" description="Helical" evidence="2">
    <location>
        <begin position="229"/>
        <end position="249"/>
    </location>
</feature>
<feature type="transmembrane region" description="Helical" evidence="2">
    <location>
        <begin position="261"/>
        <end position="281"/>
    </location>
</feature>
<feature type="transmembrane region" description="Helical" evidence="2">
    <location>
        <begin position="320"/>
        <end position="340"/>
    </location>
</feature>
<feature type="transmembrane region" description="Helical" evidence="2">
    <location>
        <begin position="364"/>
        <end position="384"/>
    </location>
</feature>
<feature type="transmembrane region" description="Helical" evidence="2">
    <location>
        <begin position="398"/>
        <end position="418"/>
    </location>
</feature>
<feature type="transmembrane region" description="Helical" evidence="2">
    <location>
        <begin position="422"/>
        <end position="442"/>
    </location>
</feature>
<feature type="transmembrane region" description="Helical" evidence="2">
    <location>
        <begin position="466"/>
        <end position="486"/>
    </location>
</feature>
<feature type="transmembrane region" description="Helical" evidence="2">
    <location>
        <begin position="507"/>
        <end position="527"/>
    </location>
</feature>
<feature type="region of interest" description="Disordered" evidence="3">
    <location>
        <begin position="14"/>
        <end position="36"/>
    </location>
</feature>
<feature type="region of interest" description="Disordered" evidence="3">
    <location>
        <begin position="78"/>
        <end position="97"/>
    </location>
</feature>
<feature type="splice variant" id="VSP_036390" description="In isoform 2." evidence="12">
    <location>
        <begin position="1"/>
        <end position="431"/>
    </location>
</feature>
<feature type="splice variant" id="VSP_036391" description="In isoform 2." evidence="12">
    <original>GETLLFSNWAITADILM</original>
    <variation>MSLVHGSSSPDLPFLLQ</variation>
    <location>
        <begin position="432"/>
        <end position="448"/>
    </location>
</feature>
<evidence type="ECO:0000250" key="1">
    <source>
        <dbReference type="UniProtKB" id="A2SWM2"/>
    </source>
</evidence>
<evidence type="ECO:0000255" key="2"/>
<evidence type="ECO:0000256" key="3">
    <source>
        <dbReference type="SAM" id="MobiDB-lite"/>
    </source>
</evidence>
<evidence type="ECO:0000269" key="4">
    <source>
    </source>
</evidence>
<evidence type="ECO:0000269" key="5">
    <source>
    </source>
</evidence>
<evidence type="ECO:0000269" key="6">
    <source>
    </source>
</evidence>
<evidence type="ECO:0000269" key="7">
    <source>
    </source>
</evidence>
<evidence type="ECO:0000269" key="8">
    <source>
    </source>
</evidence>
<evidence type="ECO:0000269" key="9">
    <source>
    </source>
</evidence>
<evidence type="ECO:0000269" key="10">
    <source>
    </source>
</evidence>
<evidence type="ECO:0000269" key="11">
    <source>
    </source>
</evidence>
<evidence type="ECO:0000303" key="12">
    <source>
    </source>
</evidence>
<evidence type="ECO:0000303" key="13">
    <source>
    </source>
</evidence>
<evidence type="ECO:0000303" key="14">
    <source>
    </source>
</evidence>
<evidence type="ECO:0000305" key="15"/>
<evidence type="ECO:0000305" key="16">
    <source>
    </source>
</evidence>
<evidence type="ECO:0000312" key="17">
    <source>
        <dbReference type="MGI" id="MGI:2384936"/>
    </source>
</evidence>
<protein>
    <recommendedName>
        <fullName evidence="15">Sphingosine-1-phosphate transporter SPNS2</fullName>
    </recommendedName>
    <alternativeName>
        <fullName evidence="15">Protein spinster homolog 2</fullName>
    </alternativeName>
    <alternativeName>
        <fullName evidence="14">Spinster homolog 2</fullName>
        <shortName evidence="14">Spns2</shortName>
    </alternativeName>
</protein>
<proteinExistence type="evidence at protein level"/>
<reference key="1">
    <citation type="journal article" date="2009" name="PLoS Biol.">
        <title>Lineage-specific biology revealed by a finished genome assembly of the mouse.</title>
        <authorList>
            <person name="Church D.M."/>
            <person name="Goodstadt L."/>
            <person name="Hillier L.W."/>
            <person name="Zody M.C."/>
            <person name="Goldstein S."/>
            <person name="She X."/>
            <person name="Bult C.J."/>
            <person name="Agarwala R."/>
            <person name="Cherry J.L."/>
            <person name="DiCuccio M."/>
            <person name="Hlavina W."/>
            <person name="Kapustin Y."/>
            <person name="Meric P."/>
            <person name="Maglott D."/>
            <person name="Birtle Z."/>
            <person name="Marques A.C."/>
            <person name="Graves T."/>
            <person name="Zhou S."/>
            <person name="Teague B."/>
            <person name="Potamousis K."/>
            <person name="Churas C."/>
            <person name="Place M."/>
            <person name="Herschleb J."/>
            <person name="Runnheim R."/>
            <person name="Forrest D."/>
            <person name="Amos-Landgraf J."/>
            <person name="Schwartz D.C."/>
            <person name="Cheng Z."/>
            <person name="Lindblad-Toh K."/>
            <person name="Eichler E.E."/>
            <person name="Ponting C.P."/>
        </authorList>
    </citation>
    <scope>NUCLEOTIDE SEQUENCE [LARGE SCALE GENOMIC DNA]</scope>
    <source>
        <strain>C57BL/6J</strain>
    </source>
</reference>
<reference key="2">
    <citation type="journal article" date="2004" name="Genome Res.">
        <title>The status, quality, and expansion of the NIH full-length cDNA project: the Mammalian Gene Collection (MGC).</title>
        <authorList>
            <consortium name="The MGC Project Team"/>
        </authorList>
    </citation>
    <scope>NUCLEOTIDE SEQUENCE [LARGE SCALE MRNA] (ISOFORMS 1 AND 2)</scope>
    <source>
        <strain>129</strain>
        <strain>FVB/N</strain>
        <tissue>Liver</tissue>
        <tissue>Mammary tumor</tissue>
    </source>
</reference>
<reference key="3">
    <citation type="journal article" date="2009" name="Science">
        <title>The sphingolipid transporter spns2 functions in migration of zebrafish myocardial precursors.</title>
        <authorList>
            <person name="Kawahara A."/>
            <person name="Nishi T."/>
            <person name="Hisano Y."/>
            <person name="Fukui H."/>
            <person name="Yamaguchi A."/>
            <person name="Mochizuki N."/>
        </authorList>
    </citation>
    <scope>NUCLEOTIDE SEQUENCE [MRNA] OF 2-549 (ISOFORM 1)</scope>
</reference>
<reference key="4">
    <citation type="journal article" date="2012" name="J. Immunol.">
        <title>The role of sphingosine-1-phosphate transporter Spns2 in immune system function.</title>
        <authorList>
            <consortium name="Sanger Mouse Genetics Project"/>
            <person name="Nijnik A."/>
            <person name="Clare S."/>
            <person name="Hale C."/>
            <person name="Chen J."/>
            <person name="Raisen C."/>
            <person name="Mottram L."/>
            <person name="Lucas M."/>
            <person name="Estabel J."/>
            <person name="Ryder E."/>
            <person name="Adissu H."/>
            <person name="Adams N.C."/>
            <person name="Ramirez-Solis R."/>
            <person name="White J.K."/>
            <person name="Steel K.P."/>
            <person name="Dougan G."/>
            <person name="Hancock R.E."/>
        </authorList>
    </citation>
    <scope>DISRUPTION PHENOTYPE</scope>
    <scope>FUNCTION</scope>
    <scope>TISSUE SPECIFICITY</scope>
</reference>
<reference key="5">
    <citation type="journal article" date="2012" name="Cell Rep.">
        <title>The transporter Spns2 is required for secretion of lymph but not plasma sphingosine-1-phosphate.</title>
        <authorList>
            <person name="Mendoza A."/>
            <person name="Breart B."/>
            <person name="Ramos-Perez W.D."/>
            <person name="Pitt L.A."/>
            <person name="Gobert M."/>
            <person name="Sunkara M."/>
            <person name="Lafaille J.J."/>
            <person name="Morris A.J."/>
            <person name="Schwab S.R."/>
        </authorList>
    </citation>
    <scope>FUNCTION</scope>
    <scope>TISSUE SPECIFICITY</scope>
</reference>
<reference key="6">
    <citation type="journal article" date="2012" name="J. Clin. Invest.">
        <title>The sphingosine-1-phosphate transporter Spns2 expressed on endothelial cells regulates lymphocyte trafficking in mice.</title>
        <authorList>
            <person name="Fukuhara S."/>
            <person name="Simmons S."/>
            <person name="Kawamura S."/>
            <person name="Inoue A."/>
            <person name="Orba Y."/>
            <person name="Tokudome T."/>
            <person name="Sunden Y."/>
            <person name="Arai Y."/>
            <person name="Moriwaki K."/>
            <person name="Ishida J."/>
            <person name="Uemura A."/>
            <person name="Kiyonari H."/>
            <person name="Abe T."/>
            <person name="Fukamizu A."/>
            <person name="Hirashima M."/>
            <person name="Sawa H."/>
            <person name="Aoki J."/>
            <person name="Ishii M."/>
            <person name="Mochizuki N."/>
        </authorList>
    </citation>
    <scope>FUNCTION</scope>
    <scope>CATALYTIC ACTIVITY</scope>
    <scope>DISRUPTION PHENOTYPE</scope>
</reference>
<reference key="7">
    <citation type="journal article" date="2013" name="FASEB J.">
        <title>Spns2, a transporter of phosphorylated sphingoid bases, regulates their blood and lymph levels, and the lymphatic network.</title>
        <authorList>
            <person name="Nagahashi M."/>
            <person name="Kim E.Y."/>
            <person name="Yamada A."/>
            <person name="Ramachandran S."/>
            <person name="Allegood J.C."/>
            <person name="Hait N.C."/>
            <person name="Maceyka M."/>
            <person name="Milstien S."/>
            <person name="Takabe K."/>
            <person name="Spiegel S."/>
        </authorList>
    </citation>
    <scope>CATALYTIC ACTIVITY</scope>
    <scope>SUBCELLULAR LOCATION</scope>
    <scope>DISRUPTION PHENOTYPE</scope>
    <scope>FUNCTION</scope>
</reference>
<reference key="8">
    <citation type="journal article" date="2014" name="PLoS Genet.">
        <title>Spinster homolog 2 (spns2) deficiency causes early onset progressive hearing loss.</title>
        <authorList>
            <person name="Chen J."/>
            <person name="Ingham N."/>
            <person name="Kelly J."/>
            <person name="Jadeja S."/>
            <person name="Goulding D."/>
            <person name="Pass J."/>
            <person name="Mahajan V.B."/>
            <person name="Tsang S.H."/>
            <person name="Nijnik A."/>
            <person name="Jackson I.J."/>
            <person name="White J.K."/>
            <person name="Forge A."/>
            <person name="Jagger D."/>
            <person name="Steel K.P."/>
        </authorList>
    </citation>
    <scope>FUNCTION</scope>
    <scope>TISSUE SPECIFICITY</scope>
    <scope>DISRUPTION PHENOTYPE</scope>
</reference>
<reference key="9">
    <citation type="journal article" date="2019" name="PLoS Biol.">
        <title>Mouse screen reveals multiple new genes underlying mouse and human hearing loss.</title>
        <authorList>
            <person name="Ingham N.J."/>
            <person name="Pearson S.A."/>
            <person name="Vancollie V.E."/>
            <person name="Rook V."/>
            <person name="Lewis M.A."/>
            <person name="Chen J."/>
            <person name="Buniello A."/>
            <person name="Martelletti E."/>
            <person name="Preite L."/>
            <person name="Lam C.C."/>
            <person name="Weiss F.D."/>
            <person name="Powis Z."/>
            <person name="Suwannarat P."/>
            <person name="Lelliott C.J."/>
            <person name="Dawson S.J."/>
            <person name="White J.K."/>
            <person name="Steel K.P."/>
        </authorList>
    </citation>
    <scope>DISRUPTION PHENOTYPE</scope>
</reference>
<reference key="10">
    <citation type="journal article" date="2021" name="Cell Rep.">
        <title>SPNS2 enables T cell egress from lymph nodes during an immune response.</title>
        <authorList>
            <person name="Okuniewska M."/>
            <person name="Fang V."/>
            <person name="Baeyens A."/>
            <person name="Raghavan V."/>
            <person name="Lee J.Y."/>
            <person name="Littman D.R."/>
            <person name="Schwab S.R."/>
        </authorList>
    </citation>
    <scope>FUNCTION</scope>
    <scope>DISRUPTION PHENOTYPE</scope>
</reference>
<reference key="11">
    <citation type="journal article" date="2021" name="J. Biol. Chem.">
        <title>Direct uptake of sphingosine-1-phosphate independent of phospholipid phosphatases.</title>
        <authorList>
            <person name="Goto H."/>
            <person name="Miyamoto M."/>
            <person name="Kihara A."/>
        </authorList>
    </citation>
    <scope>FUNCTION</scope>
</reference>
<accession>Q91VM4</accession>
<accession>B9A1T4</accession>
<accession>Q5F242</accession>
<accession>Q8R119</accession>
<keyword id="KW-0025">Alternative splicing</keyword>
<keyword id="KW-1003">Cell membrane</keyword>
<keyword id="KW-0209">Deafness</keyword>
<keyword id="KW-0967">Endosome</keyword>
<keyword id="KW-0445">Lipid transport</keyword>
<keyword id="KW-0472">Membrane</keyword>
<keyword id="KW-1010">Non-syndromic deafness</keyword>
<keyword id="KW-1185">Reference proteome</keyword>
<keyword id="KW-0812">Transmembrane</keyword>
<keyword id="KW-1133">Transmembrane helix</keyword>
<keyword id="KW-0813">Transport</keyword>
<name>SPNS2_MOUSE</name>
<sequence>MMCLECASAAAGGAEEEEADAERRRRRRGAQPGAGGSACCGARGVGGAGVVSADEEVQTLSGSVRRVPSGLPSIPSTPGCAAAAKGPSAPQPKPASLGRGRGAAAAILSLGNVLNYLDRYTVAGVLLDIQQHFGVKDRGAGLLQSVFICSFMVAAPIFGYLGDRFNRKVILSCGIFFWSAVTFSSSFIPQQYFWLLVLSRGLVGIGEASYSTIAPTIIGDLFTKNTRTLMLSVFYFAIPLGSGLGYITGSSVKQAAGDWHWALRVSPVLGMITGTLILILVPATKRGHADQLGGQLKARTSWLRDMKALIRNRSYVFSSLATSAVSFATGALGMWIPLYLHRAQVVQKTAETCNSPPCGAKDSLIFGAITCFTGFLGVVTGAGATRWCRLRTQRADPLVCAVGMLGSAIFICLIFVAAKTSIVGAYICIFVGETLLFSNWAITADILMYVVIPTRRATAVALQSFTSHLLGDAGSPYLIGFISDLIRQSTKDSPLWEFLSLGYALMLCPFVVVLGGMFFLATALFFLSDRAKAEQQVNQLVMPPASVKV</sequence>
<organism>
    <name type="scientific">Mus musculus</name>
    <name type="common">Mouse</name>
    <dbReference type="NCBI Taxonomy" id="10090"/>
    <lineage>
        <taxon>Eukaryota</taxon>
        <taxon>Metazoa</taxon>
        <taxon>Chordata</taxon>
        <taxon>Craniata</taxon>
        <taxon>Vertebrata</taxon>
        <taxon>Euteleostomi</taxon>
        <taxon>Mammalia</taxon>
        <taxon>Eutheria</taxon>
        <taxon>Euarchontoglires</taxon>
        <taxon>Glires</taxon>
        <taxon>Rodentia</taxon>
        <taxon>Myomorpha</taxon>
        <taxon>Muroidea</taxon>
        <taxon>Muridae</taxon>
        <taxon>Murinae</taxon>
        <taxon>Mus</taxon>
        <taxon>Mus</taxon>
    </lineage>
</organism>